<protein>
    <recommendedName>
        <fullName evidence="1">Large ribosomal subunit protein uL3</fullName>
    </recommendedName>
    <alternativeName>
        <fullName evidence="3">50S ribosomal protein L3</fullName>
    </alternativeName>
</protein>
<sequence length="208" mass="22783">MVGLIGQKVGMTQIFDARGCVTPVTVIRVEHNVVVGLKDVERFGYSAVILGTGCMKKSRISKPYAGQFAERIPPVRVMREFRGFTLDVSVGQVLDVRVLESVRYLDVCALSKGKGFQGVVKRWGFSGGRSSHGSKFHREAGSTGQCTSPGRTFKNVKMPGRMGAERVTVQNLRIERIDVGLGVVMVRGAVPGRNKATVFLRTAVKRER</sequence>
<organism>
    <name type="scientific">Treponema pallidum subsp. pallidum (strain SS14)</name>
    <dbReference type="NCBI Taxonomy" id="455434"/>
    <lineage>
        <taxon>Bacteria</taxon>
        <taxon>Pseudomonadati</taxon>
        <taxon>Spirochaetota</taxon>
        <taxon>Spirochaetia</taxon>
        <taxon>Spirochaetales</taxon>
        <taxon>Treponemataceae</taxon>
        <taxon>Treponema</taxon>
    </lineage>
</organism>
<dbReference type="EMBL" id="CP000805">
    <property type="protein sequence ID" value="ACD70615.1"/>
    <property type="molecule type" value="Genomic_DNA"/>
</dbReference>
<dbReference type="RefSeq" id="WP_010881636.1">
    <property type="nucleotide sequence ID" value="NC_021508.1"/>
</dbReference>
<dbReference type="SMR" id="B2S2D6"/>
<dbReference type="GeneID" id="93875977"/>
<dbReference type="KEGG" id="tpp:TPASS_0189"/>
<dbReference type="PATRIC" id="fig|455434.6.peg.192"/>
<dbReference type="Proteomes" id="UP000001202">
    <property type="component" value="Chromosome"/>
</dbReference>
<dbReference type="GO" id="GO:0022625">
    <property type="term" value="C:cytosolic large ribosomal subunit"/>
    <property type="evidence" value="ECO:0007669"/>
    <property type="project" value="TreeGrafter"/>
</dbReference>
<dbReference type="GO" id="GO:0019843">
    <property type="term" value="F:rRNA binding"/>
    <property type="evidence" value="ECO:0007669"/>
    <property type="project" value="UniProtKB-UniRule"/>
</dbReference>
<dbReference type="GO" id="GO:0003735">
    <property type="term" value="F:structural constituent of ribosome"/>
    <property type="evidence" value="ECO:0007669"/>
    <property type="project" value="InterPro"/>
</dbReference>
<dbReference type="GO" id="GO:0006412">
    <property type="term" value="P:translation"/>
    <property type="evidence" value="ECO:0007669"/>
    <property type="project" value="UniProtKB-UniRule"/>
</dbReference>
<dbReference type="FunFam" id="2.40.30.10:FF:000004">
    <property type="entry name" value="50S ribosomal protein L3"/>
    <property type="match status" value="1"/>
</dbReference>
<dbReference type="Gene3D" id="3.30.160.810">
    <property type="match status" value="1"/>
</dbReference>
<dbReference type="Gene3D" id="2.40.30.10">
    <property type="entry name" value="Translation factors"/>
    <property type="match status" value="1"/>
</dbReference>
<dbReference type="HAMAP" id="MF_01325_B">
    <property type="entry name" value="Ribosomal_uL3_B"/>
    <property type="match status" value="1"/>
</dbReference>
<dbReference type="InterPro" id="IPR000597">
    <property type="entry name" value="Ribosomal_uL3"/>
</dbReference>
<dbReference type="InterPro" id="IPR019927">
    <property type="entry name" value="Ribosomal_uL3_bac/org-type"/>
</dbReference>
<dbReference type="InterPro" id="IPR019926">
    <property type="entry name" value="Ribosomal_uL3_CS"/>
</dbReference>
<dbReference type="InterPro" id="IPR009000">
    <property type="entry name" value="Transl_B-barrel_sf"/>
</dbReference>
<dbReference type="NCBIfam" id="TIGR03625">
    <property type="entry name" value="L3_bact"/>
    <property type="match status" value="1"/>
</dbReference>
<dbReference type="PANTHER" id="PTHR11229">
    <property type="entry name" value="50S RIBOSOMAL PROTEIN L3"/>
    <property type="match status" value="1"/>
</dbReference>
<dbReference type="PANTHER" id="PTHR11229:SF16">
    <property type="entry name" value="LARGE RIBOSOMAL SUBUNIT PROTEIN UL3C"/>
    <property type="match status" value="1"/>
</dbReference>
<dbReference type="Pfam" id="PF00297">
    <property type="entry name" value="Ribosomal_L3"/>
    <property type="match status" value="1"/>
</dbReference>
<dbReference type="SUPFAM" id="SSF50447">
    <property type="entry name" value="Translation proteins"/>
    <property type="match status" value="1"/>
</dbReference>
<dbReference type="PROSITE" id="PS00474">
    <property type="entry name" value="RIBOSOMAL_L3"/>
    <property type="match status" value="1"/>
</dbReference>
<evidence type="ECO:0000255" key="1">
    <source>
        <dbReference type="HAMAP-Rule" id="MF_01325"/>
    </source>
</evidence>
<evidence type="ECO:0000256" key="2">
    <source>
        <dbReference type="SAM" id="MobiDB-lite"/>
    </source>
</evidence>
<evidence type="ECO:0000305" key="3"/>
<proteinExistence type="inferred from homology"/>
<feature type="chain" id="PRO_1000141938" description="Large ribosomal subunit protein uL3">
    <location>
        <begin position="1"/>
        <end position="208"/>
    </location>
</feature>
<feature type="region of interest" description="Disordered" evidence="2">
    <location>
        <begin position="134"/>
        <end position="153"/>
    </location>
</feature>
<keyword id="KW-0687">Ribonucleoprotein</keyword>
<keyword id="KW-0689">Ribosomal protein</keyword>
<keyword id="KW-0694">RNA-binding</keyword>
<keyword id="KW-0699">rRNA-binding</keyword>
<comment type="function">
    <text evidence="1">One of the primary rRNA binding proteins, it binds directly near the 3'-end of the 23S rRNA, where it nucleates assembly of the 50S subunit.</text>
</comment>
<comment type="subunit">
    <text evidence="1">Part of the 50S ribosomal subunit. Forms a cluster with proteins L14 and L19.</text>
</comment>
<comment type="similarity">
    <text evidence="1">Belongs to the universal ribosomal protein uL3 family.</text>
</comment>
<reference key="1">
    <citation type="journal article" date="2008" name="BMC Microbiol.">
        <title>Complete genome sequence of Treponema pallidum ssp. pallidum strain SS14 determined with oligonucleotide arrays.</title>
        <authorList>
            <person name="Matejkova P."/>
            <person name="Strouhal M."/>
            <person name="Smajs D."/>
            <person name="Norris S.J."/>
            <person name="Palzkill T."/>
            <person name="Petrosino J.F."/>
            <person name="Sodergren E."/>
            <person name="Norton J.E."/>
            <person name="Singh J."/>
            <person name="Richmond T.A."/>
            <person name="Molla M.N."/>
            <person name="Albert T.J."/>
            <person name="Weinstock G.M."/>
        </authorList>
    </citation>
    <scope>NUCLEOTIDE SEQUENCE [LARGE SCALE GENOMIC DNA]</scope>
    <source>
        <strain>SS14</strain>
    </source>
</reference>
<name>RL3_TREPS</name>
<accession>B2S2D6</accession>
<gene>
    <name evidence="1" type="primary">rplC</name>
    <name type="ordered locus">TPASS_0189</name>
</gene>